<organism>
    <name type="scientific">Brucella suis (strain ATCC 23445 / NCTC 10510)</name>
    <dbReference type="NCBI Taxonomy" id="470137"/>
    <lineage>
        <taxon>Bacteria</taxon>
        <taxon>Pseudomonadati</taxon>
        <taxon>Pseudomonadota</taxon>
        <taxon>Alphaproteobacteria</taxon>
        <taxon>Hyphomicrobiales</taxon>
        <taxon>Brucellaceae</taxon>
        <taxon>Brucella/Ochrobactrum group</taxon>
        <taxon>Brucella</taxon>
    </lineage>
</organism>
<keyword id="KW-0678">Repressor</keyword>
<keyword id="KW-0687">Ribonucleoprotein</keyword>
<keyword id="KW-0689">Ribosomal protein</keyword>
<keyword id="KW-0694">RNA-binding</keyword>
<keyword id="KW-0699">rRNA-binding</keyword>
<keyword id="KW-0810">Translation regulation</keyword>
<keyword id="KW-0820">tRNA-binding</keyword>
<dbReference type="EMBL" id="CP000911">
    <property type="protein sequence ID" value="ABY38345.1"/>
    <property type="molecule type" value="Genomic_DNA"/>
</dbReference>
<dbReference type="RefSeq" id="WP_006070960.1">
    <property type="nucleotide sequence ID" value="NC_010169.1"/>
</dbReference>
<dbReference type="SMR" id="B0CH44"/>
<dbReference type="KEGG" id="bmt:BSUIS_A1294"/>
<dbReference type="HOGENOM" id="CLU_062853_0_0_5"/>
<dbReference type="Proteomes" id="UP000008545">
    <property type="component" value="Chromosome I"/>
</dbReference>
<dbReference type="GO" id="GO:0022625">
    <property type="term" value="C:cytosolic large ribosomal subunit"/>
    <property type="evidence" value="ECO:0007669"/>
    <property type="project" value="TreeGrafter"/>
</dbReference>
<dbReference type="GO" id="GO:0019843">
    <property type="term" value="F:rRNA binding"/>
    <property type="evidence" value="ECO:0007669"/>
    <property type="project" value="UniProtKB-UniRule"/>
</dbReference>
<dbReference type="GO" id="GO:0003735">
    <property type="term" value="F:structural constituent of ribosome"/>
    <property type="evidence" value="ECO:0007669"/>
    <property type="project" value="InterPro"/>
</dbReference>
<dbReference type="GO" id="GO:0000049">
    <property type="term" value="F:tRNA binding"/>
    <property type="evidence" value="ECO:0007669"/>
    <property type="project" value="UniProtKB-KW"/>
</dbReference>
<dbReference type="GO" id="GO:0006417">
    <property type="term" value="P:regulation of translation"/>
    <property type="evidence" value="ECO:0007669"/>
    <property type="project" value="UniProtKB-KW"/>
</dbReference>
<dbReference type="GO" id="GO:0006412">
    <property type="term" value="P:translation"/>
    <property type="evidence" value="ECO:0007669"/>
    <property type="project" value="UniProtKB-UniRule"/>
</dbReference>
<dbReference type="CDD" id="cd00403">
    <property type="entry name" value="Ribosomal_L1"/>
    <property type="match status" value="1"/>
</dbReference>
<dbReference type="FunFam" id="3.40.50.790:FF:000001">
    <property type="entry name" value="50S ribosomal protein L1"/>
    <property type="match status" value="1"/>
</dbReference>
<dbReference type="Gene3D" id="3.30.190.20">
    <property type="match status" value="1"/>
</dbReference>
<dbReference type="Gene3D" id="3.40.50.790">
    <property type="match status" value="1"/>
</dbReference>
<dbReference type="HAMAP" id="MF_01318_B">
    <property type="entry name" value="Ribosomal_uL1_B"/>
    <property type="match status" value="1"/>
</dbReference>
<dbReference type="InterPro" id="IPR005878">
    <property type="entry name" value="Ribosom_uL1_bac-type"/>
</dbReference>
<dbReference type="InterPro" id="IPR002143">
    <property type="entry name" value="Ribosomal_uL1"/>
</dbReference>
<dbReference type="InterPro" id="IPR023674">
    <property type="entry name" value="Ribosomal_uL1-like"/>
</dbReference>
<dbReference type="InterPro" id="IPR028364">
    <property type="entry name" value="Ribosomal_uL1/biogenesis"/>
</dbReference>
<dbReference type="InterPro" id="IPR016095">
    <property type="entry name" value="Ribosomal_uL1_3-a/b-sand"/>
</dbReference>
<dbReference type="InterPro" id="IPR023673">
    <property type="entry name" value="Ribosomal_uL1_CS"/>
</dbReference>
<dbReference type="NCBIfam" id="TIGR01169">
    <property type="entry name" value="rplA_bact"/>
    <property type="match status" value="1"/>
</dbReference>
<dbReference type="PANTHER" id="PTHR36427">
    <property type="entry name" value="54S RIBOSOMAL PROTEIN L1, MITOCHONDRIAL"/>
    <property type="match status" value="1"/>
</dbReference>
<dbReference type="PANTHER" id="PTHR36427:SF3">
    <property type="entry name" value="LARGE RIBOSOMAL SUBUNIT PROTEIN UL1M"/>
    <property type="match status" value="1"/>
</dbReference>
<dbReference type="Pfam" id="PF00687">
    <property type="entry name" value="Ribosomal_L1"/>
    <property type="match status" value="1"/>
</dbReference>
<dbReference type="PIRSF" id="PIRSF002155">
    <property type="entry name" value="Ribosomal_L1"/>
    <property type="match status" value="1"/>
</dbReference>
<dbReference type="SUPFAM" id="SSF56808">
    <property type="entry name" value="Ribosomal protein L1"/>
    <property type="match status" value="1"/>
</dbReference>
<dbReference type="PROSITE" id="PS01199">
    <property type="entry name" value="RIBOSOMAL_L1"/>
    <property type="match status" value="1"/>
</dbReference>
<evidence type="ECO:0000255" key="1">
    <source>
        <dbReference type="HAMAP-Rule" id="MF_01318"/>
    </source>
</evidence>
<evidence type="ECO:0000305" key="2"/>
<gene>
    <name evidence="1" type="primary">rplA</name>
    <name type="ordered locus">BSUIS_A1294</name>
</gene>
<proteinExistence type="inferred from homology"/>
<feature type="chain" id="PRO_1000086274" description="Large ribosomal subunit protein uL1">
    <location>
        <begin position="1"/>
        <end position="233"/>
    </location>
</feature>
<name>RL1_BRUSI</name>
<reference key="1">
    <citation type="submission" date="2007-12" db="EMBL/GenBank/DDBJ databases">
        <title>Brucella suis ATCC 23445 whole genome shotgun sequencing project.</title>
        <authorList>
            <person name="Setubal J.C."/>
            <person name="Bowns C."/>
            <person name="Boyle S."/>
            <person name="Crasta O.R."/>
            <person name="Czar M.J."/>
            <person name="Dharmanolla C."/>
            <person name="Gillespie J.J."/>
            <person name="Kenyon R.W."/>
            <person name="Lu J."/>
            <person name="Mane S."/>
            <person name="Mohapatra S."/>
            <person name="Nagrani S."/>
            <person name="Purkayastha A."/>
            <person name="Rajasimha H.K."/>
            <person name="Shallom J.M."/>
            <person name="Shallom S."/>
            <person name="Shukla M."/>
            <person name="Snyder E.E."/>
            <person name="Sobral B.W."/>
            <person name="Wattam A.R."/>
            <person name="Will R."/>
            <person name="Williams K."/>
            <person name="Yoo H."/>
            <person name="Bruce D."/>
            <person name="Detter C."/>
            <person name="Munk C."/>
            <person name="Brettin T.S."/>
        </authorList>
    </citation>
    <scope>NUCLEOTIDE SEQUENCE [LARGE SCALE GENOMIC DNA]</scope>
    <source>
        <strain>ATCC 23445 / NCTC 10510</strain>
    </source>
</reference>
<comment type="function">
    <text evidence="1">Binds directly to 23S rRNA. The L1 stalk is quite mobile in the ribosome, and is involved in E site tRNA release.</text>
</comment>
<comment type="function">
    <text evidence="1">Protein L1 is also a translational repressor protein, it controls the translation of the L11 operon by binding to its mRNA.</text>
</comment>
<comment type="subunit">
    <text evidence="1">Part of the 50S ribosomal subunit.</text>
</comment>
<comment type="similarity">
    <text evidence="1">Belongs to the universal ribosomal protein uL1 family.</text>
</comment>
<protein>
    <recommendedName>
        <fullName evidence="1">Large ribosomal subunit protein uL1</fullName>
    </recommendedName>
    <alternativeName>
        <fullName evidence="2">50S ribosomal protein L1</fullName>
    </alternativeName>
</protein>
<sequence length="233" mass="24641">MAKISKRINKIREGVDRNKLYDLSAAIGLVKERAVAKFDETVEIAMNLGVDPRHADQMVRGVVNLPNGTGRTVRVAVFARGDKAEEAKKAGADIVGAEELFEIVNGGKIEFDRCIATPDMMPLVGRLGKVLGPRGMMPNPKVGTVTTDVAAAVAASKGGAVEFRVEKAGIIHAGIGKVSFDNAKLEENIKTFADAVIKAKPSAAKGEYVKRVSISSTMGVGVKVDPSTVKVVD</sequence>
<accession>B0CH44</accession>